<organism>
    <name type="scientific">Salmo salar</name>
    <name type="common">Atlantic salmon</name>
    <dbReference type="NCBI Taxonomy" id="8030"/>
    <lineage>
        <taxon>Eukaryota</taxon>
        <taxon>Metazoa</taxon>
        <taxon>Chordata</taxon>
        <taxon>Craniata</taxon>
        <taxon>Vertebrata</taxon>
        <taxon>Euteleostomi</taxon>
        <taxon>Actinopterygii</taxon>
        <taxon>Neopterygii</taxon>
        <taxon>Teleostei</taxon>
        <taxon>Protacanthopterygii</taxon>
        <taxon>Salmoniformes</taxon>
        <taxon>Salmonidae</taxon>
        <taxon>Salmoninae</taxon>
        <taxon>Salmo</taxon>
    </lineage>
</organism>
<evidence type="ECO:0000250" key="1">
    <source>
        <dbReference type="UniProtKB" id="Q8WVK7"/>
    </source>
</evidence>
<evidence type="ECO:0000250" key="2">
    <source>
        <dbReference type="UniProtKB" id="Q9CR46"/>
    </source>
</evidence>
<evidence type="ECO:0000303" key="3">
    <source>
    </source>
</evidence>
<evidence type="ECO:0000305" key="4"/>
<sequence>METAVDKLEAMFQKAEADMEYMEKRLRLDFLTNVPENSAAEENPMKLLENLSAIKTRHAALCTQVQEIAAEQKQSMDAIRVHLDTTVQLVQQLQQTADVELPTVTETEQESAEFLGLSVNQNTIEVPMSMELPAQELPQSSREGEFEEVSEATLEAVPCSMRANVKLANLNAFYKQLHEYFSFRKNSGALSLPKMKQMNMKVSDAKLKTLQHLSLIELDMKGHVRLLL</sequence>
<dbReference type="EMBL" id="BT046352">
    <property type="protein sequence ID" value="ACI66153.1"/>
    <property type="molecule type" value="mRNA"/>
</dbReference>
<dbReference type="EMBL" id="BT047960">
    <property type="protein sequence ID" value="ACI67761.1"/>
    <property type="molecule type" value="mRNA"/>
</dbReference>
<dbReference type="RefSeq" id="NP_001134080.1">
    <molecule id="B5X5N3-1"/>
    <property type="nucleotide sequence ID" value="NM_001140608.2"/>
</dbReference>
<dbReference type="SMR" id="B5X5N3"/>
<dbReference type="STRING" id="8030.ENSSSAP00000017182"/>
<dbReference type="PaxDb" id="8030-ENSSSAP00000017182"/>
<dbReference type="GeneID" id="100195579"/>
<dbReference type="KEGG" id="sasa:100195579"/>
<dbReference type="CTD" id="348235"/>
<dbReference type="OrthoDB" id="566081at7898"/>
<dbReference type="Proteomes" id="UP000087266">
    <property type="component" value="Chromosome ssa13"/>
</dbReference>
<dbReference type="Bgee" id="ENSSSAG00000008209">
    <property type="expression patterns" value="Expressed in ovary and 26 other cell types or tissues"/>
</dbReference>
<dbReference type="GO" id="GO:0005737">
    <property type="term" value="C:cytoplasm"/>
    <property type="evidence" value="ECO:0007669"/>
    <property type="project" value="UniProtKB-KW"/>
</dbReference>
<dbReference type="GO" id="GO:0072687">
    <property type="term" value="C:meiotic spindle"/>
    <property type="evidence" value="ECO:0000250"/>
    <property type="project" value="UniProtKB"/>
</dbReference>
<dbReference type="GO" id="GO:0000940">
    <property type="term" value="C:outer kinetochore"/>
    <property type="evidence" value="ECO:0000250"/>
    <property type="project" value="UniProtKB"/>
</dbReference>
<dbReference type="GO" id="GO:0005876">
    <property type="term" value="C:spindle microtubule"/>
    <property type="evidence" value="ECO:0007669"/>
    <property type="project" value="InterPro"/>
</dbReference>
<dbReference type="GO" id="GO:0008017">
    <property type="term" value="F:microtubule binding"/>
    <property type="evidence" value="ECO:0000250"/>
    <property type="project" value="UniProtKB"/>
</dbReference>
<dbReference type="GO" id="GO:0051315">
    <property type="term" value="P:attachment of mitotic spindle microtubules to kinetochore"/>
    <property type="evidence" value="ECO:0000250"/>
    <property type="project" value="UniProtKB"/>
</dbReference>
<dbReference type="GO" id="GO:0051301">
    <property type="term" value="P:cell division"/>
    <property type="evidence" value="ECO:0007669"/>
    <property type="project" value="UniProtKB-KW"/>
</dbReference>
<dbReference type="GO" id="GO:0007080">
    <property type="term" value="P:mitotic metaphase chromosome alignment"/>
    <property type="evidence" value="ECO:0000250"/>
    <property type="project" value="UniProtKB"/>
</dbReference>
<dbReference type="GO" id="GO:0000070">
    <property type="term" value="P:mitotic sister chromatid segregation"/>
    <property type="evidence" value="ECO:0000250"/>
    <property type="project" value="UniProtKB"/>
</dbReference>
<dbReference type="GO" id="GO:0031110">
    <property type="term" value="P:regulation of microtubule polymerization or depolymerization"/>
    <property type="evidence" value="ECO:0000250"/>
    <property type="project" value="UniProtKB"/>
</dbReference>
<dbReference type="Gene3D" id="6.10.250.1380">
    <property type="match status" value="1"/>
</dbReference>
<dbReference type="InterPro" id="IPR026762">
    <property type="entry name" value="Ska2"/>
</dbReference>
<dbReference type="InterPro" id="IPR042091">
    <property type="entry name" value="Ska2_N"/>
</dbReference>
<dbReference type="PANTHER" id="PTHR32017">
    <property type="entry name" value="SPINDLE AND KINETOCHORE-ASSOCIATED PROTEIN 2"/>
    <property type="match status" value="1"/>
</dbReference>
<dbReference type="PANTHER" id="PTHR32017:SF3">
    <property type="entry name" value="SPINDLE AND KINETOCHORE-ASSOCIATED PROTEIN 2"/>
    <property type="match status" value="1"/>
</dbReference>
<dbReference type="Pfam" id="PF16740">
    <property type="entry name" value="SKA2"/>
    <property type="match status" value="1"/>
</dbReference>
<feature type="chain" id="PRO_0000373896" description="SKA complex subunit 2">
    <location>
        <begin position="1"/>
        <end position="228"/>
    </location>
</feature>
<feature type="splice variant" id="VSP_037278" description="In isoform 2." evidence="3">
    <location>
        <begin position="140"/>
        <end position="228"/>
    </location>
</feature>
<feature type="sequence conflict" description="In Ref. 1; ACI67761." evidence="4" ref="1">
    <original>T</original>
    <variation>P</variation>
    <location>
        <position position="86"/>
    </location>
</feature>
<keyword id="KW-0025">Alternative splicing</keyword>
<keyword id="KW-0131">Cell cycle</keyword>
<keyword id="KW-0132">Cell division</keyword>
<keyword id="KW-0137">Centromere</keyword>
<keyword id="KW-0158">Chromosome</keyword>
<keyword id="KW-0963">Cytoplasm</keyword>
<keyword id="KW-0206">Cytoskeleton</keyword>
<keyword id="KW-0995">Kinetochore</keyword>
<keyword id="KW-0493">Microtubule</keyword>
<keyword id="KW-0498">Mitosis</keyword>
<keyword id="KW-1185">Reference proteome</keyword>
<comment type="function">
    <text evidence="1 2">Component of the SKA complex, a microtubule plus end-binding complex of the outer kinetochore that stabilizes spindle microtubule-kinetochore attachments, promotes alignment of chromosomes at the mitotic spindle equator (chromosome congression) and assists suppression of the spindle assembly checkpoint. Kinetochores, consisting of a centromere-associated inner segment and a microtubule-contacting outer segment, play a crucial role in chromosome segregation by mediating the physical connection between centromeric DNA and spindle microtubules. The outer kinetochore is made up of the ten-subunit KMN network complex, comprising the MIS12, NDC80 and KNL1 complexes, and auxiliary microtubule-associated components such as the SKA complex; together they connect the outer kinetochore with the inner kinetochore, bind microtubules, and mediate interactions with mitotic checkpoint proteins that delay anaphase until chromosomes are bioriented on the spindle. The SKA complex is loaded onto bioriented kinetochores and it facilitates chromosome congression by stabilizing microtubules together with MAPRE1, and end-on attachment of the NDC80 complex to depolymerizing spindle microtubules, thereby assisting the poleward-moving kinetochore in withstanding microtubule pulling forces. The complex associates with dynamic microtubule plus-ends and can track both depolymerizing and elongating microtubules. The complex recruits protein phosphatase 1 (PP1) to the kinetochore in prometaphase and metaphase, to oppose spindle assembly checkpoint signaling and promote the onset of anaphase. Binds directly to microtubules; but with a much lower affinity than SKA1 (By similarity). During meiosis the SKA complex stabilizes the meiotic spindle and is required for its migration to the cortex (By similarity).</text>
</comment>
<comment type="subunit">
    <text evidence="1">Component of the SKA complex, composed of ska1, ska2 and ska3.</text>
</comment>
<comment type="subcellular location">
    <subcellularLocation>
        <location evidence="1">Cytoplasm</location>
        <location evidence="1">Cytoskeleton</location>
        <location evidence="1">Spindle</location>
    </subcellularLocation>
    <subcellularLocation>
        <location evidence="1">Chromosome</location>
        <location evidence="1">Centromere</location>
        <location evidence="1">Kinetochore</location>
    </subcellularLocation>
</comment>
<comment type="alternative products">
    <event type="alternative splicing"/>
    <isoform>
        <id>B5X5N3-1</id>
        <name>1</name>
        <sequence type="displayed"/>
    </isoform>
    <isoform>
        <id>B5X5N3-2</id>
        <name>2</name>
        <sequence type="described" ref="VSP_037278"/>
    </isoform>
</comment>
<comment type="similarity">
    <text evidence="4">Belongs to the SKA2 family.</text>
</comment>
<gene>
    <name type="primary">ska2</name>
    <name type="synonym">fam33a</name>
</gene>
<protein>
    <recommendedName>
        <fullName evidence="4">SKA complex subunit 2</fullName>
    </recommendedName>
    <alternativeName>
        <fullName>Protein FAM33A</fullName>
    </alternativeName>
    <alternativeName>
        <fullName>Spindle and kinetochore-associated protein 2</fullName>
    </alternativeName>
</protein>
<name>SKA2_SALSA</name>
<accession>B5X5N3</accession>
<accession>B5XA91</accession>
<proteinExistence type="evidence at transcript level"/>
<reference key="1">
    <citation type="journal article" date="2010" name="BMC Genomics">
        <title>Salmo salar and Esox lucius full-length cDNA sequences reveal changes in evolutionary pressures on a post-tetraploidization genome.</title>
        <authorList>
            <person name="Leong J.S."/>
            <person name="Jantzen S.G."/>
            <person name="von Schalburg K.R."/>
            <person name="Cooper G.A."/>
            <person name="Messmer A.M."/>
            <person name="Liao N.Y."/>
            <person name="Munro S."/>
            <person name="Moore R."/>
            <person name="Holt R.A."/>
            <person name="Jones S.J."/>
            <person name="Davidson W.S."/>
            <person name="Koop B.F."/>
        </authorList>
    </citation>
    <scope>NUCLEOTIDE SEQUENCE [LARGE SCALE MRNA] (ISOFORMS 1 AND 2)</scope>
    <source>
        <tissue>Brain</tissue>
    </source>
</reference>